<gene>
    <name type="ordered locus">MW0781</name>
</gene>
<feature type="chain" id="PRO_0000288959" description="Organic hydroperoxide resistance protein-like">
    <location>
        <begin position="1"/>
        <end position="140"/>
    </location>
</feature>
<name>OHRL_STAAW</name>
<dbReference type="EMBL" id="BA000033">
    <property type="protein sequence ID" value="BAB94646.1"/>
    <property type="molecule type" value="Genomic_DNA"/>
</dbReference>
<dbReference type="RefSeq" id="WP_000974464.1">
    <property type="nucleotide sequence ID" value="NC_003923.1"/>
</dbReference>
<dbReference type="SMR" id="Q8NXI1"/>
<dbReference type="KEGG" id="sam:MW0781"/>
<dbReference type="HOGENOM" id="CLU_106355_2_1_9"/>
<dbReference type="GO" id="GO:0006979">
    <property type="term" value="P:response to oxidative stress"/>
    <property type="evidence" value="ECO:0007669"/>
    <property type="project" value="InterPro"/>
</dbReference>
<dbReference type="Gene3D" id="2.20.25.10">
    <property type="match status" value="1"/>
</dbReference>
<dbReference type="Gene3D" id="3.30.300.20">
    <property type="match status" value="1"/>
</dbReference>
<dbReference type="InterPro" id="IPR015946">
    <property type="entry name" value="KH_dom-like_a/b"/>
</dbReference>
<dbReference type="InterPro" id="IPR019953">
    <property type="entry name" value="OHR"/>
</dbReference>
<dbReference type="InterPro" id="IPR003718">
    <property type="entry name" value="OsmC/Ohr_fam"/>
</dbReference>
<dbReference type="InterPro" id="IPR036102">
    <property type="entry name" value="OsmC/Ohrsf"/>
</dbReference>
<dbReference type="NCBIfam" id="TIGR03561">
    <property type="entry name" value="organ_hyd_perox"/>
    <property type="match status" value="1"/>
</dbReference>
<dbReference type="PANTHER" id="PTHR33797">
    <property type="entry name" value="ORGANIC HYDROPEROXIDE RESISTANCE PROTEIN-LIKE"/>
    <property type="match status" value="1"/>
</dbReference>
<dbReference type="PANTHER" id="PTHR33797:SF2">
    <property type="entry name" value="ORGANIC HYDROPEROXIDE RESISTANCE PROTEIN-LIKE"/>
    <property type="match status" value="1"/>
</dbReference>
<dbReference type="Pfam" id="PF02566">
    <property type="entry name" value="OsmC"/>
    <property type="match status" value="1"/>
</dbReference>
<dbReference type="SUPFAM" id="SSF82784">
    <property type="entry name" value="OsmC-like"/>
    <property type="match status" value="1"/>
</dbReference>
<comment type="similarity">
    <text evidence="1">Belongs to the OsmC/Ohr family.</text>
</comment>
<evidence type="ECO:0000305" key="1"/>
<protein>
    <recommendedName>
        <fullName>Organic hydroperoxide resistance protein-like</fullName>
    </recommendedName>
</protein>
<accession>Q8NXI1</accession>
<organism>
    <name type="scientific">Staphylococcus aureus (strain MW2)</name>
    <dbReference type="NCBI Taxonomy" id="196620"/>
    <lineage>
        <taxon>Bacteria</taxon>
        <taxon>Bacillati</taxon>
        <taxon>Bacillota</taxon>
        <taxon>Bacilli</taxon>
        <taxon>Bacillales</taxon>
        <taxon>Staphylococcaceae</taxon>
        <taxon>Staphylococcus</taxon>
    </lineage>
</organism>
<reference key="1">
    <citation type="journal article" date="2002" name="Lancet">
        <title>Genome and virulence determinants of high virulence community-acquired MRSA.</title>
        <authorList>
            <person name="Baba T."/>
            <person name="Takeuchi F."/>
            <person name="Kuroda M."/>
            <person name="Yuzawa H."/>
            <person name="Aoki K."/>
            <person name="Oguchi A."/>
            <person name="Nagai Y."/>
            <person name="Iwama N."/>
            <person name="Asano K."/>
            <person name="Naimi T."/>
            <person name="Kuroda H."/>
            <person name="Cui L."/>
            <person name="Yamamoto K."/>
            <person name="Hiramatsu K."/>
        </authorList>
    </citation>
    <scope>NUCLEOTIDE SEQUENCE [LARGE SCALE GENOMIC DNA]</scope>
    <source>
        <strain>MW2</strain>
    </source>
</reference>
<proteinExistence type="inferred from homology"/>
<sequence length="140" mass="15329">MAIHYETKATNVGGRKGHVYTDDRALDIDIVSPAQADGKATNPEQLFAAGYASCFNGAFDLILKQNKVRDAHPEVTLTVRLEDDSDSESPKLSVSIDATIKNVISQEEAEKYLQMAHEFCPYSKATQGNINVDLNVNVVD</sequence>